<proteinExistence type="inferred from homology"/>
<gene>
    <name evidence="1" type="primary">atpH</name>
    <name type="ordered locus">EC55989_4210</name>
</gene>
<accession>B7L885</accession>
<dbReference type="EMBL" id="CU928145">
    <property type="protein sequence ID" value="CAV00823.1"/>
    <property type="molecule type" value="Genomic_DNA"/>
</dbReference>
<dbReference type="RefSeq" id="WP_001288587.1">
    <property type="nucleotide sequence ID" value="NZ_CP028304.1"/>
</dbReference>
<dbReference type="SMR" id="B7L885"/>
<dbReference type="GeneID" id="93778232"/>
<dbReference type="KEGG" id="eck:EC55989_4210"/>
<dbReference type="HOGENOM" id="CLU_085114_3_0_6"/>
<dbReference type="Proteomes" id="UP000000746">
    <property type="component" value="Chromosome"/>
</dbReference>
<dbReference type="GO" id="GO:0005886">
    <property type="term" value="C:plasma membrane"/>
    <property type="evidence" value="ECO:0007669"/>
    <property type="project" value="UniProtKB-SubCell"/>
</dbReference>
<dbReference type="GO" id="GO:0045259">
    <property type="term" value="C:proton-transporting ATP synthase complex"/>
    <property type="evidence" value="ECO:0007669"/>
    <property type="project" value="UniProtKB-KW"/>
</dbReference>
<dbReference type="GO" id="GO:0046933">
    <property type="term" value="F:proton-transporting ATP synthase activity, rotational mechanism"/>
    <property type="evidence" value="ECO:0007669"/>
    <property type="project" value="UniProtKB-UniRule"/>
</dbReference>
<dbReference type="FunFam" id="1.10.520.20:FF:000001">
    <property type="entry name" value="ATP synthase subunit delta"/>
    <property type="match status" value="1"/>
</dbReference>
<dbReference type="Gene3D" id="1.10.520.20">
    <property type="entry name" value="N-terminal domain of the delta subunit of the F1F0-ATP synthase"/>
    <property type="match status" value="1"/>
</dbReference>
<dbReference type="HAMAP" id="MF_01416">
    <property type="entry name" value="ATP_synth_delta_bact"/>
    <property type="match status" value="1"/>
</dbReference>
<dbReference type="InterPro" id="IPR026015">
    <property type="entry name" value="ATP_synth_OSCP/delta_N_sf"/>
</dbReference>
<dbReference type="InterPro" id="IPR020781">
    <property type="entry name" value="ATPase_OSCP/d_CS"/>
</dbReference>
<dbReference type="InterPro" id="IPR000711">
    <property type="entry name" value="ATPase_OSCP/dsu"/>
</dbReference>
<dbReference type="NCBIfam" id="TIGR01145">
    <property type="entry name" value="ATP_synt_delta"/>
    <property type="match status" value="1"/>
</dbReference>
<dbReference type="NCBIfam" id="NF004402">
    <property type="entry name" value="PRK05758.2-2"/>
    <property type="match status" value="1"/>
</dbReference>
<dbReference type="NCBIfam" id="NF004404">
    <property type="entry name" value="PRK05758.2-5"/>
    <property type="match status" value="1"/>
</dbReference>
<dbReference type="PANTHER" id="PTHR11910">
    <property type="entry name" value="ATP SYNTHASE DELTA CHAIN"/>
    <property type="match status" value="1"/>
</dbReference>
<dbReference type="Pfam" id="PF00213">
    <property type="entry name" value="OSCP"/>
    <property type="match status" value="1"/>
</dbReference>
<dbReference type="PRINTS" id="PR00125">
    <property type="entry name" value="ATPASEDELTA"/>
</dbReference>
<dbReference type="SUPFAM" id="SSF47928">
    <property type="entry name" value="N-terminal domain of the delta subunit of the F1F0-ATP synthase"/>
    <property type="match status" value="1"/>
</dbReference>
<dbReference type="PROSITE" id="PS00389">
    <property type="entry name" value="ATPASE_DELTA"/>
    <property type="match status" value="1"/>
</dbReference>
<organism>
    <name type="scientific">Escherichia coli (strain 55989 / EAEC)</name>
    <dbReference type="NCBI Taxonomy" id="585055"/>
    <lineage>
        <taxon>Bacteria</taxon>
        <taxon>Pseudomonadati</taxon>
        <taxon>Pseudomonadota</taxon>
        <taxon>Gammaproteobacteria</taxon>
        <taxon>Enterobacterales</taxon>
        <taxon>Enterobacteriaceae</taxon>
        <taxon>Escherichia</taxon>
    </lineage>
</organism>
<evidence type="ECO:0000255" key="1">
    <source>
        <dbReference type="HAMAP-Rule" id="MF_01416"/>
    </source>
</evidence>
<name>ATPD_ECO55</name>
<reference key="1">
    <citation type="journal article" date="2009" name="PLoS Genet.">
        <title>Organised genome dynamics in the Escherichia coli species results in highly diverse adaptive paths.</title>
        <authorList>
            <person name="Touchon M."/>
            <person name="Hoede C."/>
            <person name="Tenaillon O."/>
            <person name="Barbe V."/>
            <person name="Baeriswyl S."/>
            <person name="Bidet P."/>
            <person name="Bingen E."/>
            <person name="Bonacorsi S."/>
            <person name="Bouchier C."/>
            <person name="Bouvet O."/>
            <person name="Calteau A."/>
            <person name="Chiapello H."/>
            <person name="Clermont O."/>
            <person name="Cruveiller S."/>
            <person name="Danchin A."/>
            <person name="Diard M."/>
            <person name="Dossat C."/>
            <person name="Karoui M.E."/>
            <person name="Frapy E."/>
            <person name="Garry L."/>
            <person name="Ghigo J.M."/>
            <person name="Gilles A.M."/>
            <person name="Johnson J."/>
            <person name="Le Bouguenec C."/>
            <person name="Lescat M."/>
            <person name="Mangenot S."/>
            <person name="Martinez-Jehanne V."/>
            <person name="Matic I."/>
            <person name="Nassif X."/>
            <person name="Oztas S."/>
            <person name="Petit M.A."/>
            <person name="Pichon C."/>
            <person name="Rouy Z."/>
            <person name="Ruf C.S."/>
            <person name="Schneider D."/>
            <person name="Tourret J."/>
            <person name="Vacherie B."/>
            <person name="Vallenet D."/>
            <person name="Medigue C."/>
            <person name="Rocha E.P.C."/>
            <person name="Denamur E."/>
        </authorList>
    </citation>
    <scope>NUCLEOTIDE SEQUENCE [LARGE SCALE GENOMIC DNA]</scope>
    <source>
        <strain>55989 / EAEC</strain>
    </source>
</reference>
<sequence>MSEFITVARPYAKAAFDFAVEHQSVERWQDMLAFAAEVTKNEQMAELLSGALAPETLAESFIAVCGEQLDENGQNLIRVMAENGRLNALPDVLEQFIHLRAVSEATAEVDVISAAALSEQQLAKISAAMEKRLSRKVKLNCKIDKSVMAGVIIRAGDMVIDGSVRGRLERLADVLQS</sequence>
<keyword id="KW-0066">ATP synthesis</keyword>
<keyword id="KW-0997">Cell inner membrane</keyword>
<keyword id="KW-1003">Cell membrane</keyword>
<keyword id="KW-0139">CF(1)</keyword>
<keyword id="KW-0375">Hydrogen ion transport</keyword>
<keyword id="KW-0406">Ion transport</keyword>
<keyword id="KW-0472">Membrane</keyword>
<keyword id="KW-1185">Reference proteome</keyword>
<keyword id="KW-0813">Transport</keyword>
<comment type="function">
    <text evidence="1">F(1)F(0) ATP synthase produces ATP from ADP in the presence of a proton or sodium gradient. F-type ATPases consist of two structural domains, F(1) containing the extramembraneous catalytic core and F(0) containing the membrane proton channel, linked together by a central stalk and a peripheral stalk. During catalysis, ATP synthesis in the catalytic domain of F(1) is coupled via a rotary mechanism of the central stalk subunits to proton translocation.</text>
</comment>
<comment type="function">
    <text evidence="1">This protein is part of the stalk that links CF(0) to CF(1). It either transmits conformational changes from CF(0) to CF(1) or is implicated in proton conduction.</text>
</comment>
<comment type="subunit">
    <text evidence="1">F-type ATPases have 2 components, F(1) - the catalytic core - and F(0) - the membrane proton channel. F(1) has five subunits: alpha(3), beta(3), gamma(1), delta(1), epsilon(1). F(0) has three main subunits: a(1), b(2) and c(10-14). The alpha and beta chains form an alternating ring which encloses part of the gamma chain. F(1) is attached to F(0) by a central stalk formed by the gamma and epsilon chains, while a peripheral stalk is formed by the delta and b chains.</text>
</comment>
<comment type="subcellular location">
    <subcellularLocation>
        <location evidence="1">Cell inner membrane</location>
        <topology evidence="1">Peripheral membrane protein</topology>
    </subcellularLocation>
</comment>
<comment type="similarity">
    <text evidence="1">Belongs to the ATPase delta chain family.</text>
</comment>
<protein>
    <recommendedName>
        <fullName evidence="1">ATP synthase subunit delta</fullName>
    </recommendedName>
    <alternativeName>
        <fullName evidence="1">ATP synthase F(1) sector subunit delta</fullName>
    </alternativeName>
    <alternativeName>
        <fullName evidence="1">F-type ATPase subunit delta</fullName>
        <shortName evidence="1">F-ATPase subunit delta</shortName>
    </alternativeName>
</protein>
<feature type="chain" id="PRO_1000184698" description="ATP synthase subunit delta">
    <location>
        <begin position="1"/>
        <end position="177"/>
    </location>
</feature>